<accession>A5C9M2</accession>
<organism>
    <name type="scientific">Vitis vinifera</name>
    <name type="common">Grape</name>
    <dbReference type="NCBI Taxonomy" id="29760"/>
    <lineage>
        <taxon>Eukaryota</taxon>
        <taxon>Viridiplantae</taxon>
        <taxon>Streptophyta</taxon>
        <taxon>Embryophyta</taxon>
        <taxon>Tracheophyta</taxon>
        <taxon>Spermatophyta</taxon>
        <taxon>Magnoliopsida</taxon>
        <taxon>eudicotyledons</taxon>
        <taxon>Gunneridae</taxon>
        <taxon>Pentapetalae</taxon>
        <taxon>rosids</taxon>
        <taxon>Vitales</taxon>
        <taxon>Vitaceae</taxon>
        <taxon>Viteae</taxon>
        <taxon>Vitis</taxon>
    </lineage>
</organism>
<gene>
    <name type="ORF">GSVIVT00007357001</name>
    <name type="ORF">LOC100250301</name>
    <name type="ORF">VITISV_036852</name>
</gene>
<name>THS5_VITVI</name>
<evidence type="ECO:0000250" key="1"/>
<evidence type="ECO:0000255" key="2">
    <source>
        <dbReference type="PROSITE-ProRule" id="PRU10023"/>
    </source>
</evidence>
<evidence type="ECO:0000305" key="3"/>
<proteinExistence type="inferred from homology"/>
<keyword id="KW-0012">Acyltransferase</keyword>
<keyword id="KW-0963">Cytoplasm</keyword>
<keyword id="KW-0611">Plant defense</keyword>
<keyword id="KW-0346">Stress response</keyword>
<keyword id="KW-0808">Transferase</keyword>
<feature type="chain" id="PRO_0000313088" description="Stilbene synthase 5">
    <location>
        <begin position="1"/>
        <end position="392"/>
    </location>
</feature>
<feature type="active site" evidence="2">
    <location>
        <position position="164"/>
    </location>
</feature>
<feature type="binding site" evidence="1">
    <location>
        <begin position="55"/>
        <end position="58"/>
    </location>
    <ligand>
        <name>substrate</name>
    </ligand>
</feature>
<feature type="binding site" evidence="1">
    <location>
        <position position="267"/>
    </location>
    <ligand>
        <name>substrate</name>
    </ligand>
</feature>
<feature type="binding site" evidence="1">
    <location>
        <begin position="305"/>
        <end position="307"/>
    </location>
    <ligand>
        <name>substrate</name>
    </ligand>
</feature>
<sequence>MASVEEIRNAQRAKGPATILAIGTATPDHCVYQSDYADYYFKVTKSEHMTELKKKFNRICDKSMIKKRYIHLTEEMLEEHPNIGAYMAPSLNIRQEIITAEVPKLGKEAALKALKEWGQPKSKITHLVFCTTSGVEMPGADYKLANLLGLETSVRRVMLYHQGCYAGGTVLRTAKDLAENNAGARVLVVCSEITVVTFRGPSEDALDSLVGQALFGDGSAAVIVGSDPNVSIERPLFQLVSAAQTFIPNSAGAIAGNLREVGLTFHLWPNVPTLISENIEKCLSQAFDPLGISNWNSLFWIAHPGGPAILDAVEAKLNLEKKKLEATRHVLSEYGNMSSACVLFILDEMRKKSLKGEKATTGEGLDWGVLFGFGPGLTIETVVLHSVPMVTN</sequence>
<reference key="1">
    <citation type="journal article" date="2007" name="Nature">
        <title>The grapevine genome sequence suggests ancestral hexaploidization in major angiosperm phyla.</title>
        <authorList>
            <person name="Jaillon O."/>
            <person name="Aury J.-M."/>
            <person name="Noel B."/>
            <person name="Policriti A."/>
            <person name="Clepet C."/>
            <person name="Casagrande A."/>
            <person name="Choisne N."/>
            <person name="Aubourg S."/>
            <person name="Vitulo N."/>
            <person name="Jubin C."/>
            <person name="Vezzi A."/>
            <person name="Legeai F."/>
            <person name="Hugueney P."/>
            <person name="Dasilva C."/>
            <person name="Horner D."/>
            <person name="Mica E."/>
            <person name="Jublot D."/>
            <person name="Poulain J."/>
            <person name="Bruyere C."/>
            <person name="Billault A."/>
            <person name="Segurens B."/>
            <person name="Gouyvenoux M."/>
            <person name="Ugarte E."/>
            <person name="Cattonaro F."/>
            <person name="Anthouard V."/>
            <person name="Vico V."/>
            <person name="Del Fabbro C."/>
            <person name="Alaux M."/>
            <person name="Di Gaspero G."/>
            <person name="Dumas V."/>
            <person name="Felice N."/>
            <person name="Paillard S."/>
            <person name="Juman I."/>
            <person name="Moroldo M."/>
            <person name="Scalabrin S."/>
            <person name="Canaguier A."/>
            <person name="Le Clainche I."/>
            <person name="Malacrida G."/>
            <person name="Durand E."/>
            <person name="Pesole G."/>
            <person name="Laucou V."/>
            <person name="Chatelet P."/>
            <person name="Merdinoglu D."/>
            <person name="Delledonne M."/>
            <person name="Pezzotti M."/>
            <person name="Lecharny A."/>
            <person name="Scarpelli C."/>
            <person name="Artiguenave F."/>
            <person name="Pe M.E."/>
            <person name="Valle G."/>
            <person name="Morgante M."/>
            <person name="Caboche M."/>
            <person name="Adam-Blondon A.-F."/>
            <person name="Weissenbach J."/>
            <person name="Quetier F."/>
            <person name="Wincker P."/>
        </authorList>
    </citation>
    <scope>NUCLEOTIDE SEQUENCE [LARGE SCALE GENOMIC DNA]</scope>
    <source>
        <strain>cv. Pinot noir / PN40024</strain>
    </source>
</reference>
<reference key="2">
    <citation type="journal article" date="2007" name="PLoS ONE">
        <title>A high quality draft consensus sequence of the genome of a heterozygous grapevine variety.</title>
        <authorList>
            <person name="Velasco R."/>
            <person name="Zharkikh A."/>
            <person name="Troggio M."/>
            <person name="Cartwright D.A."/>
            <person name="Cestaro A."/>
            <person name="Pruss D."/>
            <person name="Pindo M."/>
            <person name="FitzGerald L.M."/>
            <person name="Vezzulli S."/>
            <person name="Reid J."/>
            <person name="Malacarne G."/>
            <person name="Iliev D."/>
            <person name="Coppola G."/>
            <person name="Wardell B."/>
            <person name="Micheletti D."/>
            <person name="Macalma T."/>
            <person name="Facci M."/>
            <person name="Mitchell J.T."/>
            <person name="Perazzolli M."/>
            <person name="Eldredge G."/>
            <person name="Gatto P."/>
            <person name="Oyzerski R."/>
            <person name="Moretto M."/>
            <person name="Gutin N."/>
            <person name="Stefanini M."/>
            <person name="Chen Y."/>
            <person name="Segala C."/>
            <person name="Davenport C."/>
            <person name="Dematte L."/>
            <person name="Mraz A."/>
            <person name="Battilana J."/>
            <person name="Stormo K."/>
            <person name="Costa F."/>
            <person name="Tao Q."/>
            <person name="Si-Ammour A."/>
            <person name="Harkins T."/>
            <person name="Lackey A."/>
            <person name="Perbost C."/>
            <person name="Taillon B."/>
            <person name="Stella A."/>
            <person name="Solovyev V."/>
            <person name="Fawcett J.A."/>
            <person name="Sterck L."/>
            <person name="Vandepoele K."/>
            <person name="Grando S.M."/>
            <person name="Toppo S."/>
            <person name="Moser C."/>
            <person name="Lanchbury J."/>
            <person name="Bogden R."/>
            <person name="Skolnick M."/>
            <person name="Sgaramella V."/>
            <person name="Bhatnagar S.K."/>
            <person name="Fontana P."/>
            <person name="Gutin A."/>
            <person name="Van de Peer Y."/>
            <person name="Salamini F."/>
            <person name="Viola R."/>
        </authorList>
    </citation>
    <scope>NUCLEOTIDE SEQUENCE [LARGE SCALE GENOMIC DNA]</scope>
    <source>
        <strain>cv. Pinot noir</strain>
    </source>
</reference>
<dbReference type="EC" id="2.3.1.95"/>
<dbReference type="EMBL" id="AM487139">
    <property type="protein sequence ID" value="CAN77746.1"/>
    <property type="molecule type" value="Genomic_DNA"/>
</dbReference>
<dbReference type="SMR" id="A5C9M2"/>
<dbReference type="PaxDb" id="29760-VIT_16s0100g00780.t01"/>
<dbReference type="eggNOG" id="ENOG502QRSY">
    <property type="taxonomic scope" value="Eukaryota"/>
</dbReference>
<dbReference type="HOGENOM" id="CLU_034992_2_0_1"/>
<dbReference type="OMA" id="YADYYFK"/>
<dbReference type="UniPathway" id="UPA00372">
    <property type="reaction ID" value="UER00548"/>
</dbReference>
<dbReference type="ExpressionAtlas" id="A5C9M2">
    <property type="expression patterns" value="baseline and differential"/>
</dbReference>
<dbReference type="GO" id="GO:0005737">
    <property type="term" value="C:cytoplasm"/>
    <property type="evidence" value="ECO:0007669"/>
    <property type="project" value="UniProtKB-SubCell"/>
</dbReference>
<dbReference type="GO" id="GO:0050350">
    <property type="term" value="F:trihydroxystilbene synthase activity"/>
    <property type="evidence" value="ECO:0007669"/>
    <property type="project" value="UniProtKB-EC"/>
</dbReference>
<dbReference type="GO" id="GO:0009058">
    <property type="term" value="P:biosynthetic process"/>
    <property type="evidence" value="ECO:0007669"/>
    <property type="project" value="InterPro"/>
</dbReference>
<dbReference type="GO" id="GO:0006952">
    <property type="term" value="P:defense response"/>
    <property type="evidence" value="ECO:0007669"/>
    <property type="project" value="UniProtKB-KW"/>
</dbReference>
<dbReference type="CDD" id="cd00831">
    <property type="entry name" value="CHS_like"/>
    <property type="match status" value="1"/>
</dbReference>
<dbReference type="FunFam" id="3.40.47.10:FF:000014">
    <property type="entry name" value="Chalcone synthase 1"/>
    <property type="match status" value="1"/>
</dbReference>
<dbReference type="FunFam" id="3.40.47.10:FF:000025">
    <property type="entry name" value="Chalcone synthase 2"/>
    <property type="match status" value="1"/>
</dbReference>
<dbReference type="Gene3D" id="3.40.47.10">
    <property type="match status" value="2"/>
</dbReference>
<dbReference type="InterPro" id="IPR012328">
    <property type="entry name" value="Chalcone/stilbene_synt_C"/>
</dbReference>
<dbReference type="InterPro" id="IPR001099">
    <property type="entry name" value="Chalcone/stilbene_synt_N"/>
</dbReference>
<dbReference type="InterPro" id="IPR018088">
    <property type="entry name" value="Chalcone/stilbene_synthase_AS"/>
</dbReference>
<dbReference type="InterPro" id="IPR011141">
    <property type="entry name" value="Polyketide_synthase_type-III"/>
</dbReference>
<dbReference type="InterPro" id="IPR016039">
    <property type="entry name" value="Thiolase-like"/>
</dbReference>
<dbReference type="PANTHER" id="PTHR11877:SF14">
    <property type="entry name" value="CHALCONE SYNTHASE"/>
    <property type="match status" value="1"/>
</dbReference>
<dbReference type="PANTHER" id="PTHR11877">
    <property type="entry name" value="HYDROXYMETHYLGLUTARYL-COA SYNTHASE"/>
    <property type="match status" value="1"/>
</dbReference>
<dbReference type="Pfam" id="PF02797">
    <property type="entry name" value="Chal_sti_synt_C"/>
    <property type="match status" value="1"/>
</dbReference>
<dbReference type="Pfam" id="PF00195">
    <property type="entry name" value="Chal_sti_synt_N"/>
    <property type="match status" value="1"/>
</dbReference>
<dbReference type="PIRSF" id="PIRSF000451">
    <property type="entry name" value="PKS_III"/>
    <property type="match status" value="1"/>
</dbReference>
<dbReference type="SUPFAM" id="SSF53901">
    <property type="entry name" value="Thiolase-like"/>
    <property type="match status" value="2"/>
</dbReference>
<dbReference type="PROSITE" id="PS00441">
    <property type="entry name" value="CHALCONE_SYNTH"/>
    <property type="match status" value="1"/>
</dbReference>
<comment type="function">
    <text evidence="1">Mediates resistance to pathogens which are sensitive to stilbenes.</text>
</comment>
<comment type="catalytic activity">
    <reaction>
        <text>4-coumaroyl-CoA + 3 malonyl-CoA + 3 H(+) = trans-resveratrol + 4 CO2 + 4 CoA</text>
        <dbReference type="Rhea" id="RHEA:11936"/>
        <dbReference type="ChEBI" id="CHEBI:15378"/>
        <dbReference type="ChEBI" id="CHEBI:16526"/>
        <dbReference type="ChEBI" id="CHEBI:45713"/>
        <dbReference type="ChEBI" id="CHEBI:57287"/>
        <dbReference type="ChEBI" id="CHEBI:57355"/>
        <dbReference type="ChEBI" id="CHEBI:57384"/>
        <dbReference type="EC" id="2.3.1.95"/>
    </reaction>
</comment>
<comment type="pathway">
    <text>Phytoalexin biosynthesis; 3,4',5-trihydroxystilbene biosynthesis; 3,4',5-trihydroxystilbene from trans-4-coumarate: step 2/2.</text>
</comment>
<comment type="subunit">
    <text evidence="1">Homodimer.</text>
</comment>
<comment type="subcellular location">
    <subcellularLocation>
        <location evidence="1">Cytoplasm</location>
    </subcellularLocation>
</comment>
<comment type="similarity">
    <text evidence="3">Belongs to the thiolase-like superfamily. Chalcone/stilbene synthases family.</text>
</comment>
<protein>
    <recommendedName>
        <fullName>Stilbene synthase 5</fullName>
        <ecNumber>2.3.1.95</ecNumber>
    </recommendedName>
    <alternativeName>
        <fullName>Resveratrol synthase 5</fullName>
    </alternativeName>
    <alternativeName>
        <fullName>Trihydroxystilbene synthase 5</fullName>
        <shortName>StSy 5</shortName>
    </alternativeName>
</protein>